<sequence>MKKLVTGLLALSLFLAACGQDSDQQKDSNKEKDDKAKTEQQDKKTNDSSKDKKDNKDDSKDVNKDNKDNSANDNQQQSNSNATNNDQNQTNNNQSNSGQTTNNQKSSYVAPYYGQNAAPVARQIYPFNGNKSQALQQLPNFQTALNAANNEANKFGNGHKVYNDYSIEEHNGNYKYVFSFKDPNVNGKYSIVTVDYTGQAMVTDPNYQQ</sequence>
<proteinExistence type="inferred from homology"/>
<feature type="signal peptide" evidence="1">
    <location>
        <begin position="1"/>
        <end position="17"/>
    </location>
</feature>
<feature type="chain" id="PRO_0000296176" description="Uncharacterized lipoprotein SAR2457">
    <location>
        <begin position="18"/>
        <end position="209"/>
    </location>
</feature>
<feature type="region of interest" description="Disordered" evidence="2">
    <location>
        <begin position="17"/>
        <end position="106"/>
    </location>
</feature>
<feature type="compositionally biased region" description="Basic and acidic residues" evidence="2">
    <location>
        <begin position="23"/>
        <end position="70"/>
    </location>
</feature>
<feature type="compositionally biased region" description="Low complexity" evidence="2">
    <location>
        <begin position="71"/>
        <end position="106"/>
    </location>
</feature>
<feature type="lipid moiety-binding region" description="N-palmitoyl cysteine" evidence="1">
    <location>
        <position position="18"/>
    </location>
</feature>
<feature type="lipid moiety-binding region" description="S-diacylglycerol cysteine" evidence="1">
    <location>
        <position position="18"/>
    </location>
</feature>
<organism>
    <name type="scientific">Staphylococcus aureus (strain MRSA252)</name>
    <dbReference type="NCBI Taxonomy" id="282458"/>
    <lineage>
        <taxon>Bacteria</taxon>
        <taxon>Bacillati</taxon>
        <taxon>Bacillota</taxon>
        <taxon>Bacilli</taxon>
        <taxon>Bacillales</taxon>
        <taxon>Staphylococcaceae</taxon>
        <taxon>Staphylococcus</taxon>
    </lineage>
</organism>
<reference key="1">
    <citation type="journal article" date="2004" name="Proc. Natl. Acad. Sci. U.S.A.">
        <title>Complete genomes of two clinical Staphylococcus aureus strains: evidence for the rapid evolution of virulence and drug resistance.</title>
        <authorList>
            <person name="Holden M.T.G."/>
            <person name="Feil E.J."/>
            <person name="Lindsay J.A."/>
            <person name="Peacock S.J."/>
            <person name="Day N.P.J."/>
            <person name="Enright M.C."/>
            <person name="Foster T.J."/>
            <person name="Moore C.E."/>
            <person name="Hurst L."/>
            <person name="Atkin R."/>
            <person name="Barron A."/>
            <person name="Bason N."/>
            <person name="Bentley S.D."/>
            <person name="Chillingworth C."/>
            <person name="Chillingworth T."/>
            <person name="Churcher C."/>
            <person name="Clark L."/>
            <person name="Corton C."/>
            <person name="Cronin A."/>
            <person name="Doggett J."/>
            <person name="Dowd L."/>
            <person name="Feltwell T."/>
            <person name="Hance Z."/>
            <person name="Harris B."/>
            <person name="Hauser H."/>
            <person name="Holroyd S."/>
            <person name="Jagels K."/>
            <person name="James K.D."/>
            <person name="Lennard N."/>
            <person name="Line A."/>
            <person name="Mayes R."/>
            <person name="Moule S."/>
            <person name="Mungall K."/>
            <person name="Ormond D."/>
            <person name="Quail M.A."/>
            <person name="Rabbinowitsch E."/>
            <person name="Rutherford K.M."/>
            <person name="Sanders M."/>
            <person name="Sharp S."/>
            <person name="Simmonds M."/>
            <person name="Stevens K."/>
            <person name="Whitehead S."/>
            <person name="Barrell B.G."/>
            <person name="Spratt B.G."/>
            <person name="Parkhill J."/>
        </authorList>
    </citation>
    <scope>NUCLEOTIDE SEQUENCE [LARGE SCALE GENOMIC DNA]</scope>
    <source>
        <strain>MRSA252</strain>
    </source>
</reference>
<dbReference type="EMBL" id="BX571856">
    <property type="protein sequence ID" value="CAG41439.1"/>
    <property type="molecule type" value="Genomic_DNA"/>
</dbReference>
<dbReference type="RefSeq" id="WP_000737711.1">
    <property type="nucleotide sequence ID" value="NC_002952.2"/>
</dbReference>
<dbReference type="KEGG" id="sar:SAR2457"/>
<dbReference type="HOGENOM" id="CLU_088585_0_0_9"/>
<dbReference type="Proteomes" id="UP000000596">
    <property type="component" value="Chromosome"/>
</dbReference>
<dbReference type="GO" id="GO:0005886">
    <property type="term" value="C:plasma membrane"/>
    <property type="evidence" value="ECO:0007669"/>
    <property type="project" value="UniProtKB-SubCell"/>
</dbReference>
<dbReference type="PROSITE" id="PS51257">
    <property type="entry name" value="PROKAR_LIPOPROTEIN"/>
    <property type="match status" value="1"/>
</dbReference>
<comment type="subcellular location">
    <subcellularLocation>
        <location evidence="1">Cell membrane</location>
        <topology evidence="1">Lipid-anchor</topology>
    </subcellularLocation>
</comment>
<evidence type="ECO:0000255" key="1">
    <source>
        <dbReference type="PROSITE-ProRule" id="PRU00303"/>
    </source>
</evidence>
<evidence type="ECO:0000256" key="2">
    <source>
        <dbReference type="SAM" id="MobiDB-lite"/>
    </source>
</evidence>
<name>Y2457_STAAR</name>
<gene>
    <name type="ordered locus">SAR2457</name>
</gene>
<accession>Q6GE63</accession>
<keyword id="KW-1003">Cell membrane</keyword>
<keyword id="KW-0449">Lipoprotein</keyword>
<keyword id="KW-0472">Membrane</keyword>
<keyword id="KW-0564">Palmitate</keyword>
<keyword id="KW-0732">Signal</keyword>
<protein>
    <recommendedName>
        <fullName>Uncharacterized lipoprotein SAR2457</fullName>
    </recommendedName>
</protein>